<feature type="chain" id="PRO_0000070641" description="HTH-type transcriptional repressor FabR">
    <location>
        <begin position="1"/>
        <end position="234"/>
    </location>
</feature>
<feature type="domain" description="HTH tetR-type" evidence="1">
    <location>
        <begin position="29"/>
        <end position="89"/>
    </location>
</feature>
<feature type="DNA-binding region" description="H-T-H motif" evidence="1">
    <location>
        <begin position="52"/>
        <end position="71"/>
    </location>
</feature>
<feature type="sequence variant" description="In strain: K12 / BW25113, may not bind DNA." evidence="8">
    <original>G</original>
    <variation>V</variation>
    <location>
        <position position="61"/>
    </location>
</feature>
<feature type="sequence conflict" description="In Ref. 1; CAA46823." evidence="7" ref="1">
    <original>S</original>
    <variation>T</variation>
    <location>
        <position position="47"/>
    </location>
</feature>
<feature type="sequence conflict" description="In Ref. 1; CAA46823." evidence="7" ref="1">
    <original>G</original>
    <variation>V</variation>
    <location>
        <position position="61"/>
    </location>
</feature>
<feature type="sequence conflict" description="In Ref. 1; CAA46823." evidence="7" ref="1">
    <original>ML</original>
    <variation>IV</variation>
    <location>
        <begin position="88"/>
        <end position="89"/>
    </location>
</feature>
<feature type="sequence conflict" description="In Ref. 1; CAA46823." evidence="7" ref="1">
    <original>MR</original>
    <variation>IG</variation>
    <location>
        <begin position="93"/>
        <end position="94"/>
    </location>
</feature>
<evidence type="ECO:0000255" key="1">
    <source>
        <dbReference type="PROSITE-ProRule" id="PRU00335"/>
    </source>
</evidence>
<evidence type="ECO:0000269" key="2">
    <source>
    </source>
</evidence>
<evidence type="ECO:0000269" key="3">
    <source>
    </source>
</evidence>
<evidence type="ECO:0000269" key="4">
    <source>
    </source>
</evidence>
<evidence type="ECO:0000269" key="5">
    <source>
    </source>
</evidence>
<evidence type="ECO:0000303" key="6">
    <source>
    </source>
</evidence>
<evidence type="ECO:0000305" key="7"/>
<evidence type="ECO:0000305" key="8">
    <source>
    </source>
</evidence>
<evidence type="ECO:0000305" key="9">
    <source>
    </source>
</evidence>
<name>FABR_ECOLI</name>
<organism>
    <name type="scientific">Escherichia coli (strain K12)</name>
    <dbReference type="NCBI Taxonomy" id="83333"/>
    <lineage>
        <taxon>Bacteria</taxon>
        <taxon>Pseudomonadati</taxon>
        <taxon>Pseudomonadota</taxon>
        <taxon>Gammaproteobacteria</taxon>
        <taxon>Enterobacterales</taxon>
        <taxon>Enterobacteriaceae</taxon>
        <taxon>Escherichia</taxon>
    </lineage>
</organism>
<keyword id="KW-0963">Cytoplasm</keyword>
<keyword id="KW-0238">DNA-binding</keyword>
<keyword id="KW-0275">Fatty acid biosynthesis</keyword>
<keyword id="KW-0276">Fatty acid metabolism</keyword>
<keyword id="KW-0444">Lipid biosynthesis</keyword>
<keyword id="KW-0443">Lipid metabolism</keyword>
<keyword id="KW-1185">Reference proteome</keyword>
<keyword id="KW-0678">Repressor</keyword>
<keyword id="KW-0804">Transcription</keyword>
<keyword id="KW-0805">Transcription regulation</keyword>
<gene>
    <name evidence="6" type="primary">fabR</name>
    <name type="synonym">yijC</name>
    <name type="ordered locus">b3963</name>
    <name type="ordered locus">JW3935</name>
</gene>
<reference key="1">
    <citation type="journal article" date="1992" name="J. Bacteriol.">
        <title>Physical map of the oxyR-trmA region (minute 89.3) of the Escherichia coli chromosome.</title>
        <authorList>
            <person name="Gustafsson C."/>
            <person name="Warne S.R."/>
        </authorList>
    </citation>
    <scope>NUCLEOTIDE SEQUENCE [GENOMIC DNA]</scope>
    <source>
        <strain>K12 / W3110</strain>
    </source>
</reference>
<reference key="2">
    <citation type="journal article" date="1993" name="Nucleic Acids Res.">
        <title>Analysis of the Escherichia coli genome. IV. DNA sequence of the region from 89.2 to 92.8 minutes.</title>
        <authorList>
            <person name="Blattner F.R."/>
            <person name="Burland V.D."/>
            <person name="Plunkett G. III"/>
            <person name="Sofia H.J."/>
            <person name="Daniels D.L."/>
        </authorList>
    </citation>
    <scope>NUCLEOTIDE SEQUENCE [LARGE SCALE GENOMIC DNA]</scope>
    <source>
        <strain>K12 / MG1655 / ATCC 47076</strain>
    </source>
</reference>
<reference key="3">
    <citation type="journal article" date="1997" name="Science">
        <title>The complete genome sequence of Escherichia coli K-12.</title>
        <authorList>
            <person name="Blattner F.R."/>
            <person name="Plunkett G. III"/>
            <person name="Bloch C.A."/>
            <person name="Perna N.T."/>
            <person name="Burland V."/>
            <person name="Riley M."/>
            <person name="Collado-Vides J."/>
            <person name="Glasner J.D."/>
            <person name="Rode C.K."/>
            <person name="Mayhew G.F."/>
            <person name="Gregor J."/>
            <person name="Davis N.W."/>
            <person name="Kirkpatrick H.A."/>
            <person name="Goeden M.A."/>
            <person name="Rose D.J."/>
            <person name="Mau B."/>
            <person name="Shao Y."/>
        </authorList>
    </citation>
    <scope>NUCLEOTIDE SEQUENCE [LARGE SCALE GENOMIC DNA]</scope>
    <source>
        <strain>K12 / MG1655 / ATCC 47076</strain>
    </source>
</reference>
<reference key="4">
    <citation type="journal article" date="2006" name="Mol. Syst. Biol.">
        <title>Highly accurate genome sequences of Escherichia coli K-12 strains MG1655 and W3110.</title>
        <authorList>
            <person name="Hayashi K."/>
            <person name="Morooka N."/>
            <person name="Yamamoto Y."/>
            <person name="Fujita K."/>
            <person name="Isono K."/>
            <person name="Choi S."/>
            <person name="Ohtsubo E."/>
            <person name="Baba T."/>
            <person name="Wanner B.L."/>
            <person name="Mori H."/>
            <person name="Horiuchi T."/>
        </authorList>
    </citation>
    <scope>NUCLEOTIDE SEQUENCE [LARGE SCALE GENOMIC DNA]</scope>
    <source>
        <strain>K12 / W3110 / ATCC 27325 / DSM 5911</strain>
    </source>
</reference>
<reference key="5">
    <citation type="journal article" date="2001" name="Nucleic Acids Res.">
        <title>Phylogenetic footprinting of transcription factor binding sites in proteobacterial genomes.</title>
        <authorList>
            <person name="McCue L.A."/>
            <person name="Thompson W."/>
            <person name="Carmack C.S."/>
            <person name="Ryan M.P."/>
            <person name="Liu J.S."/>
            <person name="Derbyshire V."/>
            <person name="Lawrence C.E."/>
        </authorList>
    </citation>
    <scope>IDENTIFICATION BY MASS SPECTROMETRY</scope>
    <scope>FUNCTION IN REGULATION OF FATTY ACID BIOSYNTHESIS</scope>
    <scope>DNA-BINDING</scope>
    <source>
        <strain>K12 / MG1655 / ATCC 47076</strain>
    </source>
</reference>
<reference key="6">
    <citation type="journal article" date="2002" name="J. Biol. Chem.">
        <title>The FabR (YijC) transcription factor regulates unsaturated fatty acid biosynthesis in Escherichia coli.</title>
        <authorList>
            <person name="Zhang Y.-M."/>
            <person name="Marrakchi H."/>
            <person name="Rock C.O."/>
        </authorList>
    </citation>
    <scope>FUNCTION</scope>
    <scope>DISRUPTION PHENOTYPE</scope>
</reference>
<reference key="7">
    <citation type="journal article" date="2009" name="J. Biol. Chem.">
        <title>Transcriptional regulation of membrane lipid homeostasis in Escherichia coli.</title>
        <authorList>
            <person name="Zhu K."/>
            <person name="Zhang Y.M."/>
            <person name="Rock C.O."/>
        </authorList>
    </citation>
    <scope>FUNCTION</scope>
    <scope>POSSIBLE ACTIVITY REGULATION</scope>
    <scope>SUBUNIT</scope>
    <scope>DISRUPTION PHENOTYPE</scope>
    <scope>DNA-BINDING</scope>
    <source>
        <strain>K12</strain>
    </source>
</reference>
<reference key="8">
    <citation type="journal article" date="2011" name="Mol. Microbiol.">
        <title>Complex binding of the FabR repressor of bacterial unsaturated fatty acid biosynthesis to its cognate promoters.</title>
        <authorList>
            <person name="Feng Y."/>
            <person name="Cronan J.E."/>
        </authorList>
    </citation>
    <scope>FUNCTION</scope>
    <scope>POSSIBLE ACTIVITY REGULATION</scope>
    <scope>SUBUNIT</scope>
    <scope>DISRUPTION PHENOTYPE</scope>
    <scope>DNA-BINDING</scope>
    <source>
        <strain>K12</strain>
    </source>
</reference>
<protein>
    <recommendedName>
        <fullName evidence="6">HTH-type transcriptional repressor FabR</fullName>
    </recommendedName>
</protein>
<comment type="function">
    <text evidence="2 3 4 5">Binds the promoter region of at least fabA and fabB, but probably not yqfA (PubMed:11160901, PubMed:19854834, PubMed:21276098). Represses the transcription of fabA and fabB, involved in unsaturated fatty acid (UFA) biosynthesis (PubMed:11859088). By controlling UFA production, FabR directly influences the physical properties of the membrane bilayer.</text>
</comment>
<comment type="activity regulation">
    <text evidence="4 5">Has been suggested to require either an unsaturated acyl carrier protein or unsaturated acyl-CoA (but not their saturated equivalents) for DNA-binding (PubMed:19854834). Another group suggests that unsaturated thioesters are not essential but act instead to enhance DNA-binding (PubMed:21276098).</text>
</comment>
<comment type="subunit">
    <text evidence="8 9">Homodimer.</text>
</comment>
<comment type="subcellular location">
    <subcellularLocation>
        <location evidence="7">Cytoplasm</location>
    </subcellularLocation>
</comment>
<comment type="disruption phenotype">
    <text evidence="3 4 5">Significantly increased levels of unsaturated fatty acids (UFA) (PubMed:11859088, PubMed:19854834). Double fadR-fabR deletions have increased levels of saturated fatty acids, suggesting a functional fadR gene is required for fabR function (PubMed:11859088). Increased transcription of fabA and fabB (PubMed:11859088, PubMed:21276098).</text>
</comment>
<comment type="miscellaneous">
    <text evidence="8">Probably part of the fabR-yijD operon.</text>
</comment>
<comment type="caution">
    <text evidence="7">It is uncertain whether Met-1 or Met-20 is the initiator.</text>
</comment>
<accession>P0ACU5</accession>
<accession>P27307</accession>
<accession>Q2M8Q8</accession>
<sequence length="234" mass="26553">MFILWYSASSTFGKDSDIVMGVRAQQKEKTRRSLVEAAFSQLSAERSFASLSLREVAREAGIAPTSFYRHFRDVDELGLTMVDESGLMLRQLMRQARQRIAKGGSVIRTSVSTFMEFIGNNPNAFRLLLRERSGTSAAFRAAVAREIQHFIAELADYLELENHMPRAFTEAQAEAMVTIVFSAGAEALDVGVEQRRQLEERLVLQLRMISKGAYYWYRREQEKTAIIPGNVKDE</sequence>
<proteinExistence type="evidence at protein level"/>
<dbReference type="EMBL" id="X66026">
    <property type="protein sequence ID" value="CAA46823.1"/>
    <property type="molecule type" value="Genomic_DNA"/>
</dbReference>
<dbReference type="EMBL" id="U00006">
    <property type="protein sequence ID" value="AAC43069.1"/>
    <property type="molecule type" value="Genomic_DNA"/>
</dbReference>
<dbReference type="EMBL" id="U00096">
    <property type="protein sequence ID" value="AAC76945.3"/>
    <property type="molecule type" value="Genomic_DNA"/>
</dbReference>
<dbReference type="EMBL" id="AP009048">
    <property type="protein sequence ID" value="BAE77348.1"/>
    <property type="molecule type" value="Genomic_DNA"/>
</dbReference>
<dbReference type="RefSeq" id="NP_418398.2">
    <property type="nucleotide sequence ID" value="NC_000913.3"/>
</dbReference>
<dbReference type="SMR" id="P0ACU5"/>
<dbReference type="BioGRID" id="4261883">
    <property type="interactions" value="235"/>
</dbReference>
<dbReference type="DIP" id="DIP-12520N"/>
<dbReference type="FunCoup" id="P0ACU5">
    <property type="interactions" value="7"/>
</dbReference>
<dbReference type="STRING" id="511145.b3963"/>
<dbReference type="jPOST" id="P0ACU5"/>
<dbReference type="PaxDb" id="511145-b3963"/>
<dbReference type="EnsemblBacteria" id="AAC76945">
    <property type="protein sequence ID" value="AAC76945"/>
    <property type="gene ID" value="b3963"/>
</dbReference>
<dbReference type="GeneID" id="948460"/>
<dbReference type="KEGG" id="ecj:JW3935"/>
<dbReference type="KEGG" id="eco:b3963"/>
<dbReference type="PATRIC" id="fig|1411691.4.peg.2741"/>
<dbReference type="EchoBASE" id="EB1367"/>
<dbReference type="eggNOG" id="COG1309">
    <property type="taxonomic scope" value="Bacteria"/>
</dbReference>
<dbReference type="HOGENOM" id="CLU_081861_0_0_6"/>
<dbReference type="InParanoid" id="P0ACU5"/>
<dbReference type="BioCyc" id="EcoCyc:EG11394-MONOMER"/>
<dbReference type="PRO" id="PR:P0ACU5"/>
<dbReference type="Proteomes" id="UP000000625">
    <property type="component" value="Chromosome"/>
</dbReference>
<dbReference type="GO" id="GO:0005737">
    <property type="term" value="C:cytoplasm"/>
    <property type="evidence" value="ECO:0007669"/>
    <property type="project" value="UniProtKB-SubCell"/>
</dbReference>
<dbReference type="GO" id="GO:0003677">
    <property type="term" value="F:DNA binding"/>
    <property type="evidence" value="ECO:0007669"/>
    <property type="project" value="UniProtKB-KW"/>
</dbReference>
<dbReference type="GO" id="GO:0003700">
    <property type="term" value="F:DNA-binding transcription factor activity"/>
    <property type="evidence" value="ECO:0000314"/>
    <property type="project" value="EcoCyc"/>
</dbReference>
<dbReference type="GO" id="GO:0006633">
    <property type="term" value="P:fatty acid biosynthetic process"/>
    <property type="evidence" value="ECO:0007669"/>
    <property type="project" value="UniProtKB-UniRule"/>
</dbReference>
<dbReference type="GO" id="GO:0045892">
    <property type="term" value="P:negative regulation of DNA-templated transcription"/>
    <property type="evidence" value="ECO:0000314"/>
    <property type="project" value="EcoCyc"/>
</dbReference>
<dbReference type="GO" id="GO:0045717">
    <property type="term" value="P:negative regulation of fatty acid biosynthetic process"/>
    <property type="evidence" value="ECO:0007669"/>
    <property type="project" value="UniProtKB-UniRule"/>
</dbReference>
<dbReference type="FunFam" id="1.10.10.60:FF:000034">
    <property type="entry name" value="HTH-type transcriptional repressor FabR"/>
    <property type="match status" value="1"/>
</dbReference>
<dbReference type="FunFam" id="1.10.357.10:FF:000001">
    <property type="entry name" value="HTH-type transcriptional repressor FabR"/>
    <property type="match status" value="1"/>
</dbReference>
<dbReference type="Gene3D" id="1.10.10.60">
    <property type="entry name" value="Homeodomain-like"/>
    <property type="match status" value="1"/>
</dbReference>
<dbReference type="Gene3D" id="1.10.357.10">
    <property type="entry name" value="Tetracycline Repressor, domain 2"/>
    <property type="match status" value="1"/>
</dbReference>
<dbReference type="HAMAP" id="MF_01190">
    <property type="entry name" value="HTH_type_FabR"/>
    <property type="match status" value="1"/>
</dbReference>
<dbReference type="InterPro" id="IPR054129">
    <property type="entry name" value="DesT_TetR_C"/>
</dbReference>
<dbReference type="InterPro" id="IPR009057">
    <property type="entry name" value="Homeodomain-like_sf"/>
</dbReference>
<dbReference type="InterPro" id="IPR001647">
    <property type="entry name" value="HTH_TetR"/>
</dbReference>
<dbReference type="InterPro" id="IPR050692">
    <property type="entry name" value="HTH_transcr_repressor_FabR"/>
</dbReference>
<dbReference type="InterPro" id="IPR023764">
    <property type="entry name" value="Tscrpt_reg_HTH_FabR"/>
</dbReference>
<dbReference type="NCBIfam" id="NF008402">
    <property type="entry name" value="PRK11202.1"/>
    <property type="match status" value="1"/>
</dbReference>
<dbReference type="PANTHER" id="PTHR47752">
    <property type="entry name" value="HTH-TYPE TRANSCRIPTIONAL REPRESSOR FABR"/>
    <property type="match status" value="1"/>
</dbReference>
<dbReference type="PANTHER" id="PTHR47752:SF1">
    <property type="entry name" value="HTH-TYPE TRANSCRIPTIONAL REPRESSOR FABR"/>
    <property type="match status" value="1"/>
</dbReference>
<dbReference type="Pfam" id="PF21943">
    <property type="entry name" value="TetR_C_46"/>
    <property type="match status" value="1"/>
</dbReference>
<dbReference type="Pfam" id="PF00440">
    <property type="entry name" value="TetR_N"/>
    <property type="match status" value="1"/>
</dbReference>
<dbReference type="SUPFAM" id="SSF46689">
    <property type="entry name" value="Homeodomain-like"/>
    <property type="match status" value="1"/>
</dbReference>
<dbReference type="PROSITE" id="PS50977">
    <property type="entry name" value="HTH_TETR_2"/>
    <property type="match status" value="1"/>
</dbReference>